<evidence type="ECO:0000255" key="1">
    <source>
        <dbReference type="HAMAP-Rule" id="MF_00054"/>
    </source>
</evidence>
<dbReference type="EMBL" id="AL111168">
    <property type="protein sequence ID" value="CAL34641.1"/>
    <property type="molecule type" value="Genomic_DNA"/>
</dbReference>
<dbReference type="PIR" id="H81394">
    <property type="entry name" value="H81394"/>
</dbReference>
<dbReference type="RefSeq" id="WP_002779472.1">
    <property type="nucleotide sequence ID" value="NZ_SZUC01000002.1"/>
</dbReference>
<dbReference type="RefSeq" id="YP_002343927.1">
    <property type="nucleotide sequence ID" value="NC_002163.1"/>
</dbReference>
<dbReference type="SMR" id="Q9PI16"/>
<dbReference type="IntAct" id="Q9PI16">
    <property type="interactions" value="20"/>
</dbReference>
<dbReference type="STRING" id="192222.Cj0493"/>
<dbReference type="PaxDb" id="192222-Cj0493"/>
<dbReference type="EnsemblBacteria" id="CAL34641">
    <property type="protein sequence ID" value="CAL34641"/>
    <property type="gene ID" value="Cj0493"/>
</dbReference>
<dbReference type="GeneID" id="904822"/>
<dbReference type="KEGG" id="cje:Cj0493"/>
<dbReference type="PATRIC" id="fig|192222.6.peg.485"/>
<dbReference type="eggNOG" id="COG0480">
    <property type="taxonomic scope" value="Bacteria"/>
</dbReference>
<dbReference type="HOGENOM" id="CLU_002794_4_1_7"/>
<dbReference type="OrthoDB" id="9804431at2"/>
<dbReference type="Proteomes" id="UP000000799">
    <property type="component" value="Chromosome"/>
</dbReference>
<dbReference type="GO" id="GO:0005737">
    <property type="term" value="C:cytoplasm"/>
    <property type="evidence" value="ECO:0007669"/>
    <property type="project" value="UniProtKB-SubCell"/>
</dbReference>
<dbReference type="GO" id="GO:0005525">
    <property type="term" value="F:GTP binding"/>
    <property type="evidence" value="ECO:0007669"/>
    <property type="project" value="UniProtKB-UniRule"/>
</dbReference>
<dbReference type="GO" id="GO:0003924">
    <property type="term" value="F:GTPase activity"/>
    <property type="evidence" value="ECO:0007669"/>
    <property type="project" value="InterPro"/>
</dbReference>
<dbReference type="GO" id="GO:0003746">
    <property type="term" value="F:translation elongation factor activity"/>
    <property type="evidence" value="ECO:0007669"/>
    <property type="project" value="UniProtKB-UniRule"/>
</dbReference>
<dbReference type="GO" id="GO:0032790">
    <property type="term" value="P:ribosome disassembly"/>
    <property type="evidence" value="ECO:0007669"/>
    <property type="project" value="TreeGrafter"/>
</dbReference>
<dbReference type="CDD" id="cd01886">
    <property type="entry name" value="EF-G"/>
    <property type="match status" value="1"/>
</dbReference>
<dbReference type="CDD" id="cd16262">
    <property type="entry name" value="EFG_III"/>
    <property type="match status" value="1"/>
</dbReference>
<dbReference type="CDD" id="cd01434">
    <property type="entry name" value="EFG_mtEFG1_IV"/>
    <property type="match status" value="1"/>
</dbReference>
<dbReference type="CDD" id="cd03713">
    <property type="entry name" value="EFG_mtEFG_C"/>
    <property type="match status" value="1"/>
</dbReference>
<dbReference type="CDD" id="cd04088">
    <property type="entry name" value="EFG_mtEFG_II"/>
    <property type="match status" value="1"/>
</dbReference>
<dbReference type="FunFam" id="2.40.30.10:FF:000006">
    <property type="entry name" value="Elongation factor G"/>
    <property type="match status" value="1"/>
</dbReference>
<dbReference type="FunFam" id="3.30.230.10:FF:000003">
    <property type="entry name" value="Elongation factor G"/>
    <property type="match status" value="1"/>
</dbReference>
<dbReference type="FunFam" id="3.30.70.240:FF:000001">
    <property type="entry name" value="Elongation factor G"/>
    <property type="match status" value="1"/>
</dbReference>
<dbReference type="FunFam" id="3.30.70.870:FF:000001">
    <property type="entry name" value="Elongation factor G"/>
    <property type="match status" value="1"/>
</dbReference>
<dbReference type="FunFam" id="3.40.50.300:FF:000029">
    <property type="entry name" value="Elongation factor G"/>
    <property type="match status" value="1"/>
</dbReference>
<dbReference type="Gene3D" id="3.30.230.10">
    <property type="match status" value="1"/>
</dbReference>
<dbReference type="Gene3D" id="3.30.70.240">
    <property type="match status" value="1"/>
</dbReference>
<dbReference type="Gene3D" id="3.30.70.870">
    <property type="entry name" value="Elongation Factor G (Translational Gtpase), domain 3"/>
    <property type="match status" value="1"/>
</dbReference>
<dbReference type="Gene3D" id="3.40.50.300">
    <property type="entry name" value="P-loop containing nucleotide triphosphate hydrolases"/>
    <property type="match status" value="1"/>
</dbReference>
<dbReference type="Gene3D" id="2.40.30.10">
    <property type="entry name" value="Translation factors"/>
    <property type="match status" value="1"/>
</dbReference>
<dbReference type="HAMAP" id="MF_00054_B">
    <property type="entry name" value="EF_G_EF_2_B"/>
    <property type="match status" value="1"/>
</dbReference>
<dbReference type="InterPro" id="IPR053905">
    <property type="entry name" value="EF-G-like_DII"/>
</dbReference>
<dbReference type="InterPro" id="IPR041095">
    <property type="entry name" value="EFG_II"/>
</dbReference>
<dbReference type="InterPro" id="IPR009022">
    <property type="entry name" value="EFG_III"/>
</dbReference>
<dbReference type="InterPro" id="IPR035647">
    <property type="entry name" value="EFG_III/V"/>
</dbReference>
<dbReference type="InterPro" id="IPR047872">
    <property type="entry name" value="EFG_IV"/>
</dbReference>
<dbReference type="InterPro" id="IPR035649">
    <property type="entry name" value="EFG_V"/>
</dbReference>
<dbReference type="InterPro" id="IPR000640">
    <property type="entry name" value="EFG_V-like"/>
</dbReference>
<dbReference type="InterPro" id="IPR031157">
    <property type="entry name" value="G_TR_CS"/>
</dbReference>
<dbReference type="InterPro" id="IPR027417">
    <property type="entry name" value="P-loop_NTPase"/>
</dbReference>
<dbReference type="InterPro" id="IPR020568">
    <property type="entry name" value="Ribosomal_Su5_D2-typ_SF"/>
</dbReference>
<dbReference type="InterPro" id="IPR014721">
    <property type="entry name" value="Ribsml_uS5_D2-typ_fold_subgr"/>
</dbReference>
<dbReference type="InterPro" id="IPR005225">
    <property type="entry name" value="Small_GTP-bd"/>
</dbReference>
<dbReference type="InterPro" id="IPR000795">
    <property type="entry name" value="T_Tr_GTP-bd_dom"/>
</dbReference>
<dbReference type="InterPro" id="IPR009000">
    <property type="entry name" value="Transl_B-barrel_sf"/>
</dbReference>
<dbReference type="InterPro" id="IPR004540">
    <property type="entry name" value="Transl_elong_EFG/EF2"/>
</dbReference>
<dbReference type="InterPro" id="IPR005517">
    <property type="entry name" value="Transl_elong_EFG/EF2_IV"/>
</dbReference>
<dbReference type="NCBIfam" id="TIGR00484">
    <property type="entry name" value="EF-G"/>
    <property type="match status" value="1"/>
</dbReference>
<dbReference type="NCBIfam" id="NF009379">
    <property type="entry name" value="PRK12740.1-3"/>
    <property type="match status" value="1"/>
</dbReference>
<dbReference type="NCBIfam" id="NF009381">
    <property type="entry name" value="PRK12740.1-5"/>
    <property type="match status" value="1"/>
</dbReference>
<dbReference type="NCBIfam" id="TIGR00231">
    <property type="entry name" value="small_GTP"/>
    <property type="match status" value="1"/>
</dbReference>
<dbReference type="PANTHER" id="PTHR43261:SF1">
    <property type="entry name" value="RIBOSOME-RELEASING FACTOR 2, MITOCHONDRIAL"/>
    <property type="match status" value="1"/>
</dbReference>
<dbReference type="PANTHER" id="PTHR43261">
    <property type="entry name" value="TRANSLATION ELONGATION FACTOR G-RELATED"/>
    <property type="match status" value="1"/>
</dbReference>
<dbReference type="Pfam" id="PF22042">
    <property type="entry name" value="EF-G_D2"/>
    <property type="match status" value="1"/>
</dbReference>
<dbReference type="Pfam" id="PF00679">
    <property type="entry name" value="EFG_C"/>
    <property type="match status" value="1"/>
</dbReference>
<dbReference type="Pfam" id="PF14492">
    <property type="entry name" value="EFG_III"/>
    <property type="match status" value="1"/>
</dbReference>
<dbReference type="Pfam" id="PF03764">
    <property type="entry name" value="EFG_IV"/>
    <property type="match status" value="1"/>
</dbReference>
<dbReference type="Pfam" id="PF00009">
    <property type="entry name" value="GTP_EFTU"/>
    <property type="match status" value="1"/>
</dbReference>
<dbReference type="PRINTS" id="PR00315">
    <property type="entry name" value="ELONGATNFCT"/>
</dbReference>
<dbReference type="SMART" id="SM00838">
    <property type="entry name" value="EFG_C"/>
    <property type="match status" value="1"/>
</dbReference>
<dbReference type="SMART" id="SM00889">
    <property type="entry name" value="EFG_IV"/>
    <property type="match status" value="1"/>
</dbReference>
<dbReference type="SUPFAM" id="SSF54980">
    <property type="entry name" value="EF-G C-terminal domain-like"/>
    <property type="match status" value="2"/>
</dbReference>
<dbReference type="SUPFAM" id="SSF52540">
    <property type="entry name" value="P-loop containing nucleoside triphosphate hydrolases"/>
    <property type="match status" value="1"/>
</dbReference>
<dbReference type="SUPFAM" id="SSF54211">
    <property type="entry name" value="Ribosomal protein S5 domain 2-like"/>
    <property type="match status" value="1"/>
</dbReference>
<dbReference type="SUPFAM" id="SSF50447">
    <property type="entry name" value="Translation proteins"/>
    <property type="match status" value="1"/>
</dbReference>
<dbReference type="PROSITE" id="PS00301">
    <property type="entry name" value="G_TR_1"/>
    <property type="match status" value="1"/>
</dbReference>
<dbReference type="PROSITE" id="PS51722">
    <property type="entry name" value="G_TR_2"/>
    <property type="match status" value="1"/>
</dbReference>
<gene>
    <name evidence="1" type="primary">fusA</name>
    <name type="ordered locus">Cj0493</name>
</gene>
<keyword id="KW-0963">Cytoplasm</keyword>
<keyword id="KW-0251">Elongation factor</keyword>
<keyword id="KW-0342">GTP-binding</keyword>
<keyword id="KW-0547">Nucleotide-binding</keyword>
<keyword id="KW-0648">Protein biosynthesis</keyword>
<keyword id="KW-1185">Reference proteome</keyword>
<proteinExistence type="inferred from homology"/>
<organism>
    <name type="scientific">Campylobacter jejuni subsp. jejuni serotype O:2 (strain ATCC 700819 / NCTC 11168)</name>
    <dbReference type="NCBI Taxonomy" id="192222"/>
    <lineage>
        <taxon>Bacteria</taxon>
        <taxon>Pseudomonadati</taxon>
        <taxon>Campylobacterota</taxon>
        <taxon>Epsilonproteobacteria</taxon>
        <taxon>Campylobacterales</taxon>
        <taxon>Campylobacteraceae</taxon>
        <taxon>Campylobacter</taxon>
    </lineage>
</organism>
<sequence>MSRSTPLKKVRNIGIAAHIDAGKTTTSERILFFTGMSHKIGEVHDGAATMDWMEQEKERGITITSAATTCFWKDHQINLIDTPGHVDFTIEVERSMRVLDGAVAVFCSVGGVQPQSETVWRQANKYGVPRIVFVNKMDRIGANFYNVEDQIRNRLKANPVPLQIPIGAEDNFKGVIDLVTMKALVWEDDTKPTDYVEKEIPAELKEKAEEYRTKMIEAVSETSDELMEKYLGGEELSLEEIKTGIKAGCLSLSIVPMLCGTAFKNKGVQPLLDAVVAYLPAPDEVANIKGEYEDGTEVSVKSTDDGEFAGLAFKIMTDPFVGQLTFVRVYRGCLESGSYAYNSTKDKKERIGRLLKMHSNKREEIKVLYAGEIGAVVGLKDTLTGDTLASEKDKVILERMDFPDPVISVAVEPKTKADQEKMSIALNKLAQEDPSFRVSTDEESGQTIISGMGELHLEIIVDRMLREFKVEAEVGQPQVAYRETIRKTVEQEYKYAKQSGGRGQYGHVFLRLEPLEPGSGYEFVNDIKGGVIPKEYIPAVDKGVQEALQNGVLAGYPVEDVKVTVYDGSYHEVDSSEMAFKLAASMGFKEGARKAGAVILEPMMKVEVETPEDYMGDVIGDLNKRRGQVNSMDERGGNKIITAFCPLAEMFGYSTDLRSQTQGRATYSMEFDHYDEVPKNVADEIIKKRNG</sequence>
<comment type="function">
    <text evidence="1">Catalyzes the GTP-dependent ribosomal translocation step during translation elongation. During this step, the ribosome changes from the pre-translocational (PRE) to the post-translocational (POST) state as the newly formed A-site-bound peptidyl-tRNA and P-site-bound deacylated tRNA move to the P and E sites, respectively. Catalyzes the coordinated movement of the two tRNA molecules, the mRNA and conformational changes in the ribosome.</text>
</comment>
<comment type="subcellular location">
    <subcellularLocation>
        <location evidence="1">Cytoplasm</location>
    </subcellularLocation>
</comment>
<comment type="similarity">
    <text evidence="1">Belongs to the TRAFAC class translation factor GTPase superfamily. Classic translation factor GTPase family. EF-G/EF-2 subfamily.</text>
</comment>
<feature type="chain" id="PRO_0000091097" description="Elongation factor G">
    <location>
        <begin position="1"/>
        <end position="691"/>
    </location>
</feature>
<feature type="domain" description="tr-type G">
    <location>
        <begin position="8"/>
        <end position="283"/>
    </location>
</feature>
<feature type="binding site" evidence="1">
    <location>
        <begin position="17"/>
        <end position="24"/>
    </location>
    <ligand>
        <name>GTP</name>
        <dbReference type="ChEBI" id="CHEBI:37565"/>
    </ligand>
</feature>
<feature type="binding site" evidence="1">
    <location>
        <begin position="81"/>
        <end position="85"/>
    </location>
    <ligand>
        <name>GTP</name>
        <dbReference type="ChEBI" id="CHEBI:37565"/>
    </ligand>
</feature>
<feature type="binding site" evidence="1">
    <location>
        <begin position="135"/>
        <end position="138"/>
    </location>
    <ligand>
        <name>GTP</name>
        <dbReference type="ChEBI" id="CHEBI:37565"/>
    </ligand>
</feature>
<accession>Q9PI16</accession>
<accession>Q0PB20</accession>
<reference key="1">
    <citation type="journal article" date="2000" name="Nature">
        <title>The genome sequence of the food-borne pathogen Campylobacter jejuni reveals hypervariable sequences.</title>
        <authorList>
            <person name="Parkhill J."/>
            <person name="Wren B.W."/>
            <person name="Mungall K.L."/>
            <person name="Ketley J.M."/>
            <person name="Churcher C.M."/>
            <person name="Basham D."/>
            <person name="Chillingworth T."/>
            <person name="Davies R.M."/>
            <person name="Feltwell T."/>
            <person name="Holroyd S."/>
            <person name="Jagels K."/>
            <person name="Karlyshev A.V."/>
            <person name="Moule S."/>
            <person name="Pallen M.J."/>
            <person name="Penn C.W."/>
            <person name="Quail M.A."/>
            <person name="Rajandream M.A."/>
            <person name="Rutherford K.M."/>
            <person name="van Vliet A.H.M."/>
            <person name="Whitehead S."/>
            <person name="Barrell B.G."/>
        </authorList>
    </citation>
    <scope>NUCLEOTIDE SEQUENCE [LARGE SCALE GENOMIC DNA]</scope>
    <source>
        <strain>ATCC 700819 / NCTC 11168</strain>
    </source>
</reference>
<name>EFG_CAMJE</name>
<protein>
    <recommendedName>
        <fullName evidence="1">Elongation factor G</fullName>
        <shortName evidence="1">EF-G</shortName>
    </recommendedName>
</protein>